<name>LEPA_STAAM</name>
<proteinExistence type="inferred from homology"/>
<protein>
    <recommendedName>
        <fullName evidence="1">Elongation factor 4</fullName>
        <shortName evidence="1">EF-4</shortName>
        <ecNumber evidence="1">3.6.5.n1</ecNumber>
    </recommendedName>
    <alternativeName>
        <fullName evidence="1">Ribosomal back-translocase LepA</fullName>
    </alternativeName>
</protein>
<feature type="chain" id="PRO_0000176341" description="Elongation factor 4">
    <location>
        <begin position="1"/>
        <end position="607"/>
    </location>
</feature>
<feature type="domain" description="tr-type G">
    <location>
        <begin position="11"/>
        <end position="193"/>
    </location>
</feature>
<feature type="binding site" evidence="1">
    <location>
        <begin position="23"/>
        <end position="28"/>
    </location>
    <ligand>
        <name>GTP</name>
        <dbReference type="ChEBI" id="CHEBI:37565"/>
    </ligand>
</feature>
<feature type="binding site" evidence="1">
    <location>
        <begin position="140"/>
        <end position="143"/>
    </location>
    <ligand>
        <name>GTP</name>
        <dbReference type="ChEBI" id="CHEBI:37565"/>
    </ligand>
</feature>
<comment type="function">
    <text evidence="1">Required for accurate and efficient protein synthesis under certain stress conditions. May act as a fidelity factor of the translation reaction, by catalyzing a one-codon backward translocation of tRNAs on improperly translocated ribosomes. Back-translocation proceeds from a post-translocation (POST) complex to a pre-translocation (PRE) complex, thus giving elongation factor G a second chance to translocate the tRNAs correctly. Binds to ribosomes in a GTP-dependent manner.</text>
</comment>
<comment type="catalytic activity">
    <reaction evidence="1">
        <text>GTP + H2O = GDP + phosphate + H(+)</text>
        <dbReference type="Rhea" id="RHEA:19669"/>
        <dbReference type="ChEBI" id="CHEBI:15377"/>
        <dbReference type="ChEBI" id="CHEBI:15378"/>
        <dbReference type="ChEBI" id="CHEBI:37565"/>
        <dbReference type="ChEBI" id="CHEBI:43474"/>
        <dbReference type="ChEBI" id="CHEBI:58189"/>
        <dbReference type="EC" id="3.6.5.n1"/>
    </reaction>
</comment>
<comment type="subcellular location">
    <subcellularLocation>
        <location evidence="1">Cell membrane</location>
        <topology evidence="1">Peripheral membrane protein</topology>
        <orientation evidence="1">Cytoplasmic side</orientation>
    </subcellularLocation>
</comment>
<comment type="similarity">
    <text evidence="1">Belongs to the TRAFAC class translation factor GTPase superfamily. Classic translation factor GTPase family. LepA subfamily.</text>
</comment>
<dbReference type="EC" id="3.6.5.n1" evidence="1"/>
<dbReference type="EMBL" id="BA000017">
    <property type="protein sequence ID" value="BAB57747.1"/>
    <property type="molecule type" value="Genomic_DNA"/>
</dbReference>
<dbReference type="RefSeq" id="WP_000368338.1">
    <property type="nucleotide sequence ID" value="NC_002758.2"/>
</dbReference>
<dbReference type="SMR" id="P65271"/>
<dbReference type="KEGG" id="sav:SAV1585"/>
<dbReference type="HOGENOM" id="CLU_009995_3_3_9"/>
<dbReference type="PhylomeDB" id="P65271"/>
<dbReference type="Proteomes" id="UP000002481">
    <property type="component" value="Chromosome"/>
</dbReference>
<dbReference type="GO" id="GO:0005886">
    <property type="term" value="C:plasma membrane"/>
    <property type="evidence" value="ECO:0007669"/>
    <property type="project" value="UniProtKB-SubCell"/>
</dbReference>
<dbReference type="GO" id="GO:0005525">
    <property type="term" value="F:GTP binding"/>
    <property type="evidence" value="ECO:0007669"/>
    <property type="project" value="UniProtKB-UniRule"/>
</dbReference>
<dbReference type="GO" id="GO:0003924">
    <property type="term" value="F:GTPase activity"/>
    <property type="evidence" value="ECO:0007669"/>
    <property type="project" value="UniProtKB-UniRule"/>
</dbReference>
<dbReference type="GO" id="GO:0043022">
    <property type="term" value="F:ribosome binding"/>
    <property type="evidence" value="ECO:0007669"/>
    <property type="project" value="UniProtKB-UniRule"/>
</dbReference>
<dbReference type="GO" id="GO:0003746">
    <property type="term" value="F:translation elongation factor activity"/>
    <property type="evidence" value="ECO:0007669"/>
    <property type="project" value="UniProtKB-UniRule"/>
</dbReference>
<dbReference type="GO" id="GO:0045727">
    <property type="term" value="P:positive regulation of translation"/>
    <property type="evidence" value="ECO:0007669"/>
    <property type="project" value="UniProtKB-UniRule"/>
</dbReference>
<dbReference type="CDD" id="cd03699">
    <property type="entry name" value="EF4_II"/>
    <property type="match status" value="1"/>
</dbReference>
<dbReference type="CDD" id="cd16260">
    <property type="entry name" value="EF4_III"/>
    <property type="match status" value="1"/>
</dbReference>
<dbReference type="CDD" id="cd01890">
    <property type="entry name" value="LepA"/>
    <property type="match status" value="1"/>
</dbReference>
<dbReference type="CDD" id="cd03709">
    <property type="entry name" value="lepA_C"/>
    <property type="match status" value="1"/>
</dbReference>
<dbReference type="FunFam" id="3.40.50.300:FF:000078">
    <property type="entry name" value="Elongation factor 4"/>
    <property type="match status" value="1"/>
</dbReference>
<dbReference type="FunFam" id="2.40.30.10:FF:000015">
    <property type="entry name" value="Translation factor GUF1, mitochondrial"/>
    <property type="match status" value="1"/>
</dbReference>
<dbReference type="FunFam" id="3.30.70.240:FF:000007">
    <property type="entry name" value="Translation factor GUF1, mitochondrial"/>
    <property type="match status" value="1"/>
</dbReference>
<dbReference type="FunFam" id="3.30.70.2570:FF:000001">
    <property type="entry name" value="Translation factor GUF1, mitochondrial"/>
    <property type="match status" value="1"/>
</dbReference>
<dbReference type="FunFam" id="3.30.70.870:FF:000004">
    <property type="entry name" value="Translation factor GUF1, mitochondrial"/>
    <property type="match status" value="1"/>
</dbReference>
<dbReference type="Gene3D" id="3.30.70.240">
    <property type="match status" value="1"/>
</dbReference>
<dbReference type="Gene3D" id="3.30.70.2570">
    <property type="entry name" value="Elongation factor 4, C-terminal domain"/>
    <property type="match status" value="1"/>
</dbReference>
<dbReference type="Gene3D" id="3.30.70.870">
    <property type="entry name" value="Elongation Factor G (Translational Gtpase), domain 3"/>
    <property type="match status" value="1"/>
</dbReference>
<dbReference type="Gene3D" id="3.40.50.300">
    <property type="entry name" value="P-loop containing nucleotide triphosphate hydrolases"/>
    <property type="match status" value="1"/>
</dbReference>
<dbReference type="Gene3D" id="2.40.30.10">
    <property type="entry name" value="Translation factors"/>
    <property type="match status" value="1"/>
</dbReference>
<dbReference type="HAMAP" id="MF_00071">
    <property type="entry name" value="LepA"/>
    <property type="match status" value="1"/>
</dbReference>
<dbReference type="InterPro" id="IPR006297">
    <property type="entry name" value="EF-4"/>
</dbReference>
<dbReference type="InterPro" id="IPR035647">
    <property type="entry name" value="EFG_III/V"/>
</dbReference>
<dbReference type="InterPro" id="IPR000640">
    <property type="entry name" value="EFG_V-like"/>
</dbReference>
<dbReference type="InterPro" id="IPR004161">
    <property type="entry name" value="EFTu-like_2"/>
</dbReference>
<dbReference type="InterPro" id="IPR031157">
    <property type="entry name" value="G_TR_CS"/>
</dbReference>
<dbReference type="InterPro" id="IPR038363">
    <property type="entry name" value="LepA_C_sf"/>
</dbReference>
<dbReference type="InterPro" id="IPR013842">
    <property type="entry name" value="LepA_CTD"/>
</dbReference>
<dbReference type="InterPro" id="IPR035654">
    <property type="entry name" value="LepA_IV"/>
</dbReference>
<dbReference type="InterPro" id="IPR027417">
    <property type="entry name" value="P-loop_NTPase"/>
</dbReference>
<dbReference type="InterPro" id="IPR005225">
    <property type="entry name" value="Small_GTP-bd"/>
</dbReference>
<dbReference type="InterPro" id="IPR000795">
    <property type="entry name" value="T_Tr_GTP-bd_dom"/>
</dbReference>
<dbReference type="InterPro" id="IPR009000">
    <property type="entry name" value="Transl_B-barrel_sf"/>
</dbReference>
<dbReference type="NCBIfam" id="TIGR01393">
    <property type="entry name" value="lepA"/>
    <property type="match status" value="1"/>
</dbReference>
<dbReference type="NCBIfam" id="TIGR00231">
    <property type="entry name" value="small_GTP"/>
    <property type="match status" value="1"/>
</dbReference>
<dbReference type="PANTHER" id="PTHR43512:SF4">
    <property type="entry name" value="TRANSLATION FACTOR GUF1 HOMOLOG, CHLOROPLASTIC"/>
    <property type="match status" value="1"/>
</dbReference>
<dbReference type="PANTHER" id="PTHR43512">
    <property type="entry name" value="TRANSLATION FACTOR GUF1-RELATED"/>
    <property type="match status" value="1"/>
</dbReference>
<dbReference type="Pfam" id="PF00679">
    <property type="entry name" value="EFG_C"/>
    <property type="match status" value="1"/>
</dbReference>
<dbReference type="Pfam" id="PF00009">
    <property type="entry name" value="GTP_EFTU"/>
    <property type="match status" value="1"/>
</dbReference>
<dbReference type="Pfam" id="PF03144">
    <property type="entry name" value="GTP_EFTU_D2"/>
    <property type="match status" value="1"/>
</dbReference>
<dbReference type="Pfam" id="PF06421">
    <property type="entry name" value="LepA_C"/>
    <property type="match status" value="1"/>
</dbReference>
<dbReference type="PRINTS" id="PR00315">
    <property type="entry name" value="ELONGATNFCT"/>
</dbReference>
<dbReference type="SMART" id="SM00838">
    <property type="entry name" value="EFG_C"/>
    <property type="match status" value="1"/>
</dbReference>
<dbReference type="SUPFAM" id="SSF54980">
    <property type="entry name" value="EF-G C-terminal domain-like"/>
    <property type="match status" value="2"/>
</dbReference>
<dbReference type="SUPFAM" id="SSF52540">
    <property type="entry name" value="P-loop containing nucleoside triphosphate hydrolases"/>
    <property type="match status" value="1"/>
</dbReference>
<dbReference type="SUPFAM" id="SSF50447">
    <property type="entry name" value="Translation proteins"/>
    <property type="match status" value="1"/>
</dbReference>
<dbReference type="PROSITE" id="PS00301">
    <property type="entry name" value="G_TR_1"/>
    <property type="match status" value="1"/>
</dbReference>
<dbReference type="PROSITE" id="PS51722">
    <property type="entry name" value="G_TR_2"/>
    <property type="match status" value="1"/>
</dbReference>
<reference key="1">
    <citation type="journal article" date="2001" name="Lancet">
        <title>Whole genome sequencing of meticillin-resistant Staphylococcus aureus.</title>
        <authorList>
            <person name="Kuroda M."/>
            <person name="Ohta T."/>
            <person name="Uchiyama I."/>
            <person name="Baba T."/>
            <person name="Yuzawa H."/>
            <person name="Kobayashi I."/>
            <person name="Cui L."/>
            <person name="Oguchi A."/>
            <person name="Aoki K."/>
            <person name="Nagai Y."/>
            <person name="Lian J.-Q."/>
            <person name="Ito T."/>
            <person name="Kanamori M."/>
            <person name="Matsumaru H."/>
            <person name="Maruyama A."/>
            <person name="Murakami H."/>
            <person name="Hosoyama A."/>
            <person name="Mizutani-Ui Y."/>
            <person name="Takahashi N.K."/>
            <person name="Sawano T."/>
            <person name="Inoue R."/>
            <person name="Kaito C."/>
            <person name="Sekimizu K."/>
            <person name="Hirakawa H."/>
            <person name="Kuhara S."/>
            <person name="Goto S."/>
            <person name="Yabuzaki J."/>
            <person name="Kanehisa M."/>
            <person name="Yamashita A."/>
            <person name="Oshima K."/>
            <person name="Furuya K."/>
            <person name="Yoshino C."/>
            <person name="Shiba T."/>
            <person name="Hattori M."/>
            <person name="Ogasawara N."/>
            <person name="Hayashi H."/>
            <person name="Hiramatsu K."/>
        </authorList>
    </citation>
    <scope>NUCLEOTIDE SEQUENCE [LARGE SCALE GENOMIC DNA]</scope>
    <source>
        <strain>Mu50 / ATCC 700699</strain>
    </source>
</reference>
<sequence length="607" mass="68189">MDNEQRLKRRENIRNFSIIAHIDHGKSTLADRILENTKSVETRDMQDQLLDSMDLERERGITIKLNAVRLKYEAKDGNTYTFHLIDTPGHVDFTYEVSRSLAACEGAILVVDAAQGIEAQTLANVYLALDNELELLPVINKIDLPAAEPERVKQEIEDMIGLDQDDVVLASAKSNIGIEEILEKIVEVVPAPDGDPEAPLKALIFDSEYDPYRGVISSIRIVDGVVKAGDKIRMMATGKEFEVTEVGINTPKQLPVDELTVGDVGYIIASIKNVDDSRVGDTITLASRPASEPLQGYKKMNPMVYCGLFPIDNKNYNDLREALEKLQLNDASLEFEPESSQALGFGYRTGFLGMLHMEIIQERIEREFGIELIATAPSVIYQCILRDGSEVTVDNPAQMPDRDKIDKIFEPYVRATMMVPNDYVGAVMELCQRKRGQFINMDYLDDIRVNIVYELPLAEVVFDFFDQLKSNTKGYASFDYEFIENKESNLVKMDILLNGDKVDALSFIVHRDFAYERGKALVEKLKTLIPRQQFEVPVQAAIGQKIVARTNIKSMGKNVLAKCYGGDISRKRKLLEKQKAGKAKMKAVGNVEIPQDAFLAVLKMDDE</sequence>
<keyword id="KW-1003">Cell membrane</keyword>
<keyword id="KW-0342">GTP-binding</keyword>
<keyword id="KW-0378">Hydrolase</keyword>
<keyword id="KW-0472">Membrane</keyword>
<keyword id="KW-0547">Nucleotide-binding</keyword>
<keyword id="KW-0648">Protein biosynthesis</keyword>
<gene>
    <name evidence="1" type="primary">lepA</name>
    <name type="ordered locus">SAV1585</name>
</gene>
<accession>P65271</accession>
<accession>Q99TR4</accession>
<evidence type="ECO:0000255" key="1">
    <source>
        <dbReference type="HAMAP-Rule" id="MF_00071"/>
    </source>
</evidence>
<organism>
    <name type="scientific">Staphylococcus aureus (strain Mu50 / ATCC 700699)</name>
    <dbReference type="NCBI Taxonomy" id="158878"/>
    <lineage>
        <taxon>Bacteria</taxon>
        <taxon>Bacillati</taxon>
        <taxon>Bacillota</taxon>
        <taxon>Bacilli</taxon>
        <taxon>Bacillales</taxon>
        <taxon>Staphylococcaceae</taxon>
        <taxon>Staphylococcus</taxon>
    </lineage>
</organism>